<sequence length="972" mass="110128">MTDTTKIDYSKTLYLPQTEFPMRAGLPQREPLFVQRWEEMNLYKKLREQAKDRPLYVLHDGPPYANGNIHIGHALNKILKDVITRSFQMRGYNSNYVPGWDCHGLPIEWKIEEKYRAAGKNKDEVPINEFRKECREFASNWIRVQTEEFKRLAILGDFENPYTTMNFHAEARIAGELLKFAASGQLYRGSKPVMWSVVERTALAEAEVEYHDIESDMIWVKFPVAGEVATENDLSGSAVVIWTTTPWTIPGNRAVSYSSRIEYGLFEITEAENDFGPRPGERLVFADKLVEECCAKAKLQFKRLRSVSAEELGKIVLDHPLKGFGGGYEFVVPMLDGDHVTDDAGTGFVHTAPSHGREDFEAWMDNARQLEARGIDPNIPFPVGDDGFYTKDAPGFGPDREGGPARVIDDNGKKGDANKVVIEQLIAADKLFARGRLKHSYPHSWRSKKPVIFRNTPQWFVYMDKNLGDGTTLRSRALKVIDETRFVPTAGQTRLRSMIEGRPDWVLSRQRAWGVPICVFVDEEGNILQDDAVNKRIMDAFEKEGADAWFADGARERFLGARAGEGWTQVRDILDVWFDSGSTHTFTLEDRPDLKWPADVYLEGSDQHRGWFHSSLLESCGTRGRAPYNAVVTHGFTMDEHGKKMSKSLGNTVTPQDVIKESGADILRLWVMTTDYWEDQRLGKSIIQTNIDAYRKLRNTIRWMLGTLAHDEGENVAYADLPELERLMLHRLTELDELVRSGYDTFDFKRIARALVDFMNVELSAFYFDIRKDALYCDAPSSIRRKAALQTVREIFVRLTTWLAPMLPFTMEEAWLDRYPQSVSIHAEQFRPTPAEWRDDVLAEKWRKVRAVRRVVTGALELERADKRIGSSLEAAPVVYIADKSLSDSLEGLDFAEICITSGISVSDAAAPEGAFTLGDVKGVAVVPERAKGEKCARSWRYTTDVGADPEFPEVSARDAAALRELQALGKL</sequence>
<organism>
    <name type="scientific">Brucella melitensis biotype 1 (strain ATCC 23456 / CCUG 17765 / NCTC 10094 / 16M)</name>
    <dbReference type="NCBI Taxonomy" id="224914"/>
    <lineage>
        <taxon>Bacteria</taxon>
        <taxon>Pseudomonadati</taxon>
        <taxon>Pseudomonadota</taxon>
        <taxon>Alphaproteobacteria</taxon>
        <taxon>Hyphomicrobiales</taxon>
        <taxon>Brucellaceae</taxon>
        <taxon>Brucella/Ochrobactrum group</taxon>
        <taxon>Brucella</taxon>
    </lineage>
</organism>
<proteinExistence type="inferred from homology"/>
<feature type="chain" id="PRO_0000098363" description="Isoleucine--tRNA ligase">
    <location>
        <begin position="1"/>
        <end position="972"/>
    </location>
</feature>
<feature type="short sequence motif" description="'HIGH' region">
    <location>
        <begin position="63"/>
        <end position="73"/>
    </location>
</feature>
<feature type="short sequence motif" description="'KMSKS' region">
    <location>
        <begin position="644"/>
        <end position="648"/>
    </location>
</feature>
<feature type="binding site" evidence="1">
    <location>
        <position position="603"/>
    </location>
    <ligand>
        <name>L-isoleucyl-5'-AMP</name>
        <dbReference type="ChEBI" id="CHEBI:178002"/>
    </ligand>
</feature>
<feature type="binding site" evidence="1">
    <location>
        <position position="647"/>
    </location>
    <ligand>
        <name>ATP</name>
        <dbReference type="ChEBI" id="CHEBI:30616"/>
    </ligand>
</feature>
<accession>Q8YB57</accession>
<comment type="function">
    <text evidence="1">Catalyzes the attachment of isoleucine to tRNA(Ile). As IleRS can inadvertently accommodate and process structurally similar amino acids such as valine, to avoid such errors it has two additional distinct tRNA(Ile)-dependent editing activities. One activity is designated as 'pretransfer' editing and involves the hydrolysis of activated Val-AMP. The other activity is designated 'posttransfer' editing and involves deacylation of mischarged Val-tRNA(Ile).</text>
</comment>
<comment type="catalytic activity">
    <reaction evidence="1">
        <text>tRNA(Ile) + L-isoleucine + ATP = L-isoleucyl-tRNA(Ile) + AMP + diphosphate</text>
        <dbReference type="Rhea" id="RHEA:11060"/>
        <dbReference type="Rhea" id="RHEA-COMP:9666"/>
        <dbReference type="Rhea" id="RHEA-COMP:9695"/>
        <dbReference type="ChEBI" id="CHEBI:30616"/>
        <dbReference type="ChEBI" id="CHEBI:33019"/>
        <dbReference type="ChEBI" id="CHEBI:58045"/>
        <dbReference type="ChEBI" id="CHEBI:78442"/>
        <dbReference type="ChEBI" id="CHEBI:78528"/>
        <dbReference type="ChEBI" id="CHEBI:456215"/>
        <dbReference type="EC" id="6.1.1.5"/>
    </reaction>
</comment>
<comment type="subunit">
    <text evidence="1">Monomer.</text>
</comment>
<comment type="subcellular location">
    <subcellularLocation>
        <location evidence="1">Cytoplasm</location>
    </subcellularLocation>
</comment>
<comment type="domain">
    <text evidence="1">IleRS has two distinct active sites: one for aminoacylation and one for editing. The misactivated valine is translocated from the active site to the editing site, which sterically excludes the correctly activated isoleucine. The single editing site contains two valyl binding pockets, one specific for each substrate (Val-AMP or Val-tRNA(Ile)).</text>
</comment>
<comment type="similarity">
    <text evidence="1">Belongs to the class-I aminoacyl-tRNA synthetase family. IleS type 1 subfamily.</text>
</comment>
<evidence type="ECO:0000255" key="1">
    <source>
        <dbReference type="HAMAP-Rule" id="MF_02002"/>
    </source>
</evidence>
<gene>
    <name evidence="1" type="primary">ileS</name>
    <name type="ordered locus">BMEII1043</name>
</gene>
<protein>
    <recommendedName>
        <fullName evidence="1">Isoleucine--tRNA ligase</fullName>
        <ecNumber evidence="1">6.1.1.5</ecNumber>
    </recommendedName>
    <alternativeName>
        <fullName evidence="1">Isoleucyl-tRNA synthetase</fullName>
        <shortName evidence="1">IleRS</shortName>
    </alternativeName>
</protein>
<dbReference type="EC" id="6.1.1.5" evidence="1"/>
<dbReference type="EMBL" id="AE008918">
    <property type="protein sequence ID" value="AAL54285.1"/>
    <property type="molecule type" value="Genomic_DNA"/>
</dbReference>
<dbReference type="PIR" id="AB3640">
    <property type="entry name" value="AB3640"/>
</dbReference>
<dbReference type="RefSeq" id="WP_004681446.1">
    <property type="nucleotide sequence ID" value="NZ_GG703779.1"/>
</dbReference>
<dbReference type="SMR" id="Q8YB57"/>
<dbReference type="GeneID" id="29595769"/>
<dbReference type="KEGG" id="bme:BMEII1043"/>
<dbReference type="KEGG" id="bmel:DK63_2213"/>
<dbReference type="PATRIC" id="fig|224914.52.peg.2319"/>
<dbReference type="eggNOG" id="COG0060">
    <property type="taxonomic scope" value="Bacteria"/>
</dbReference>
<dbReference type="PhylomeDB" id="Q8YB57"/>
<dbReference type="Proteomes" id="UP000000419">
    <property type="component" value="Chromosome II"/>
</dbReference>
<dbReference type="GO" id="GO:0005829">
    <property type="term" value="C:cytosol"/>
    <property type="evidence" value="ECO:0007669"/>
    <property type="project" value="TreeGrafter"/>
</dbReference>
<dbReference type="GO" id="GO:0002161">
    <property type="term" value="F:aminoacyl-tRNA deacylase activity"/>
    <property type="evidence" value="ECO:0007669"/>
    <property type="project" value="InterPro"/>
</dbReference>
<dbReference type="GO" id="GO:0005524">
    <property type="term" value="F:ATP binding"/>
    <property type="evidence" value="ECO:0007669"/>
    <property type="project" value="UniProtKB-UniRule"/>
</dbReference>
<dbReference type="GO" id="GO:0004822">
    <property type="term" value="F:isoleucine-tRNA ligase activity"/>
    <property type="evidence" value="ECO:0007669"/>
    <property type="project" value="UniProtKB-UniRule"/>
</dbReference>
<dbReference type="GO" id="GO:0000049">
    <property type="term" value="F:tRNA binding"/>
    <property type="evidence" value="ECO:0007669"/>
    <property type="project" value="InterPro"/>
</dbReference>
<dbReference type="GO" id="GO:0006428">
    <property type="term" value="P:isoleucyl-tRNA aminoacylation"/>
    <property type="evidence" value="ECO:0007669"/>
    <property type="project" value="UniProtKB-UniRule"/>
</dbReference>
<dbReference type="CDD" id="cd07960">
    <property type="entry name" value="Anticodon_Ia_Ile_BEm"/>
    <property type="match status" value="1"/>
</dbReference>
<dbReference type="FunFam" id="3.40.50.620:FF:000042">
    <property type="entry name" value="Isoleucine--tRNA ligase"/>
    <property type="match status" value="1"/>
</dbReference>
<dbReference type="Gene3D" id="1.10.730.20">
    <property type="match status" value="1"/>
</dbReference>
<dbReference type="Gene3D" id="3.40.50.620">
    <property type="entry name" value="HUPs"/>
    <property type="match status" value="2"/>
</dbReference>
<dbReference type="Gene3D" id="3.90.740.10">
    <property type="entry name" value="Valyl/Leucyl/Isoleucyl-tRNA synthetase, editing domain"/>
    <property type="match status" value="1"/>
</dbReference>
<dbReference type="HAMAP" id="MF_02002">
    <property type="entry name" value="Ile_tRNA_synth_type1"/>
    <property type="match status" value="1"/>
</dbReference>
<dbReference type="InterPro" id="IPR001412">
    <property type="entry name" value="aa-tRNA-synth_I_CS"/>
</dbReference>
<dbReference type="InterPro" id="IPR002300">
    <property type="entry name" value="aa-tRNA-synth_Ia"/>
</dbReference>
<dbReference type="InterPro" id="IPR033708">
    <property type="entry name" value="Anticodon_Ile_BEm"/>
</dbReference>
<dbReference type="InterPro" id="IPR002301">
    <property type="entry name" value="Ile-tRNA-ligase"/>
</dbReference>
<dbReference type="InterPro" id="IPR023585">
    <property type="entry name" value="Ile-tRNA-ligase_type1"/>
</dbReference>
<dbReference type="InterPro" id="IPR050081">
    <property type="entry name" value="Ile-tRNA_ligase"/>
</dbReference>
<dbReference type="InterPro" id="IPR013155">
    <property type="entry name" value="M/V/L/I-tRNA-synth_anticd-bd"/>
</dbReference>
<dbReference type="InterPro" id="IPR014729">
    <property type="entry name" value="Rossmann-like_a/b/a_fold"/>
</dbReference>
<dbReference type="InterPro" id="IPR009080">
    <property type="entry name" value="tRNAsynth_Ia_anticodon-bd"/>
</dbReference>
<dbReference type="InterPro" id="IPR009008">
    <property type="entry name" value="Val/Leu/Ile-tRNA-synth_edit"/>
</dbReference>
<dbReference type="NCBIfam" id="TIGR00392">
    <property type="entry name" value="ileS"/>
    <property type="match status" value="1"/>
</dbReference>
<dbReference type="PANTHER" id="PTHR42765:SF1">
    <property type="entry name" value="ISOLEUCINE--TRNA LIGASE, MITOCHONDRIAL"/>
    <property type="match status" value="1"/>
</dbReference>
<dbReference type="PANTHER" id="PTHR42765">
    <property type="entry name" value="SOLEUCYL-TRNA SYNTHETASE"/>
    <property type="match status" value="1"/>
</dbReference>
<dbReference type="Pfam" id="PF08264">
    <property type="entry name" value="Anticodon_1"/>
    <property type="match status" value="1"/>
</dbReference>
<dbReference type="Pfam" id="PF00133">
    <property type="entry name" value="tRNA-synt_1"/>
    <property type="match status" value="1"/>
</dbReference>
<dbReference type="PRINTS" id="PR00984">
    <property type="entry name" value="TRNASYNTHILE"/>
</dbReference>
<dbReference type="SUPFAM" id="SSF47323">
    <property type="entry name" value="Anticodon-binding domain of a subclass of class I aminoacyl-tRNA synthetases"/>
    <property type="match status" value="1"/>
</dbReference>
<dbReference type="SUPFAM" id="SSF52374">
    <property type="entry name" value="Nucleotidylyl transferase"/>
    <property type="match status" value="1"/>
</dbReference>
<dbReference type="SUPFAM" id="SSF50677">
    <property type="entry name" value="ValRS/IleRS/LeuRS editing domain"/>
    <property type="match status" value="1"/>
</dbReference>
<dbReference type="PROSITE" id="PS00178">
    <property type="entry name" value="AA_TRNA_LIGASE_I"/>
    <property type="match status" value="1"/>
</dbReference>
<name>SYI_BRUME</name>
<reference key="1">
    <citation type="journal article" date="2002" name="Proc. Natl. Acad. Sci. U.S.A.">
        <title>The genome sequence of the facultative intracellular pathogen Brucella melitensis.</title>
        <authorList>
            <person name="DelVecchio V.G."/>
            <person name="Kapatral V."/>
            <person name="Redkar R.J."/>
            <person name="Patra G."/>
            <person name="Mujer C."/>
            <person name="Los T."/>
            <person name="Ivanova N."/>
            <person name="Anderson I."/>
            <person name="Bhattacharyya A."/>
            <person name="Lykidis A."/>
            <person name="Reznik G."/>
            <person name="Jablonski L."/>
            <person name="Larsen N."/>
            <person name="D'Souza M."/>
            <person name="Bernal A."/>
            <person name="Mazur M."/>
            <person name="Goltsman E."/>
            <person name="Selkov E."/>
            <person name="Elzer P.H."/>
            <person name="Hagius S."/>
            <person name="O'Callaghan D."/>
            <person name="Letesson J.-J."/>
            <person name="Haselkorn R."/>
            <person name="Kyrpides N.C."/>
            <person name="Overbeek R."/>
        </authorList>
    </citation>
    <scope>NUCLEOTIDE SEQUENCE [LARGE SCALE GENOMIC DNA]</scope>
    <source>
        <strain>ATCC 23456 / CCUG 17765 / NCTC 10094 / 16M</strain>
    </source>
</reference>
<keyword id="KW-0030">Aminoacyl-tRNA synthetase</keyword>
<keyword id="KW-0067">ATP-binding</keyword>
<keyword id="KW-0963">Cytoplasm</keyword>
<keyword id="KW-0436">Ligase</keyword>
<keyword id="KW-0547">Nucleotide-binding</keyword>
<keyword id="KW-0648">Protein biosynthesis</keyword>